<feature type="chain" id="PRO_1000127891" description="ATP synthase epsilon chain">
    <location>
        <begin position="1"/>
        <end position="142"/>
    </location>
</feature>
<protein>
    <recommendedName>
        <fullName evidence="1">ATP synthase epsilon chain</fullName>
    </recommendedName>
    <alternativeName>
        <fullName evidence="1">ATP synthase F1 sector epsilon subunit</fullName>
    </alternativeName>
    <alternativeName>
        <fullName evidence="1">F-ATPase epsilon subunit</fullName>
    </alternativeName>
</protein>
<evidence type="ECO:0000255" key="1">
    <source>
        <dbReference type="HAMAP-Rule" id="MF_00530"/>
    </source>
</evidence>
<dbReference type="EMBL" id="CP000961">
    <property type="protein sequence ID" value="ACA89146.1"/>
    <property type="molecule type" value="Genomic_DNA"/>
</dbReference>
<dbReference type="RefSeq" id="WP_012327463.1">
    <property type="nucleotide sequence ID" value="NC_010506.1"/>
</dbReference>
<dbReference type="SMR" id="B1KQ33"/>
<dbReference type="STRING" id="392500.Swoo_4897"/>
<dbReference type="KEGG" id="swd:Swoo_4897"/>
<dbReference type="eggNOG" id="COG0355">
    <property type="taxonomic scope" value="Bacteria"/>
</dbReference>
<dbReference type="HOGENOM" id="CLU_084338_2_0_6"/>
<dbReference type="Proteomes" id="UP000002168">
    <property type="component" value="Chromosome"/>
</dbReference>
<dbReference type="GO" id="GO:0005886">
    <property type="term" value="C:plasma membrane"/>
    <property type="evidence" value="ECO:0007669"/>
    <property type="project" value="UniProtKB-SubCell"/>
</dbReference>
<dbReference type="GO" id="GO:0045259">
    <property type="term" value="C:proton-transporting ATP synthase complex"/>
    <property type="evidence" value="ECO:0007669"/>
    <property type="project" value="UniProtKB-KW"/>
</dbReference>
<dbReference type="GO" id="GO:0005524">
    <property type="term" value="F:ATP binding"/>
    <property type="evidence" value="ECO:0007669"/>
    <property type="project" value="UniProtKB-UniRule"/>
</dbReference>
<dbReference type="GO" id="GO:0046933">
    <property type="term" value="F:proton-transporting ATP synthase activity, rotational mechanism"/>
    <property type="evidence" value="ECO:0007669"/>
    <property type="project" value="UniProtKB-UniRule"/>
</dbReference>
<dbReference type="CDD" id="cd12152">
    <property type="entry name" value="F1-ATPase_delta"/>
    <property type="match status" value="1"/>
</dbReference>
<dbReference type="FunFam" id="1.20.5.440:FF:000001">
    <property type="entry name" value="ATP synthase epsilon chain"/>
    <property type="match status" value="1"/>
</dbReference>
<dbReference type="FunFam" id="2.60.15.10:FF:000001">
    <property type="entry name" value="ATP synthase epsilon chain"/>
    <property type="match status" value="1"/>
</dbReference>
<dbReference type="Gene3D" id="1.20.5.440">
    <property type="entry name" value="ATP synthase delta/epsilon subunit, C-terminal domain"/>
    <property type="match status" value="1"/>
</dbReference>
<dbReference type="Gene3D" id="2.60.15.10">
    <property type="entry name" value="F0F1 ATP synthase delta/epsilon subunit, N-terminal"/>
    <property type="match status" value="1"/>
</dbReference>
<dbReference type="HAMAP" id="MF_00530">
    <property type="entry name" value="ATP_synth_epsil_bac"/>
    <property type="match status" value="1"/>
</dbReference>
<dbReference type="InterPro" id="IPR036794">
    <property type="entry name" value="ATP_F1_dsu/esu_C_sf"/>
</dbReference>
<dbReference type="InterPro" id="IPR001469">
    <property type="entry name" value="ATP_synth_F1_dsu/esu"/>
</dbReference>
<dbReference type="InterPro" id="IPR020546">
    <property type="entry name" value="ATP_synth_F1_dsu/esu_N"/>
</dbReference>
<dbReference type="InterPro" id="IPR020547">
    <property type="entry name" value="ATP_synth_F1_esu_C"/>
</dbReference>
<dbReference type="InterPro" id="IPR036771">
    <property type="entry name" value="ATPsynth_dsu/esu_N"/>
</dbReference>
<dbReference type="NCBIfam" id="TIGR01216">
    <property type="entry name" value="ATP_synt_epsi"/>
    <property type="match status" value="1"/>
</dbReference>
<dbReference type="NCBIfam" id="NF001847">
    <property type="entry name" value="PRK00571.1-4"/>
    <property type="match status" value="1"/>
</dbReference>
<dbReference type="PANTHER" id="PTHR13822">
    <property type="entry name" value="ATP SYNTHASE DELTA/EPSILON CHAIN"/>
    <property type="match status" value="1"/>
</dbReference>
<dbReference type="PANTHER" id="PTHR13822:SF10">
    <property type="entry name" value="ATP SYNTHASE EPSILON CHAIN, CHLOROPLASTIC"/>
    <property type="match status" value="1"/>
</dbReference>
<dbReference type="Pfam" id="PF00401">
    <property type="entry name" value="ATP-synt_DE"/>
    <property type="match status" value="1"/>
</dbReference>
<dbReference type="Pfam" id="PF02823">
    <property type="entry name" value="ATP-synt_DE_N"/>
    <property type="match status" value="1"/>
</dbReference>
<dbReference type="SUPFAM" id="SSF46604">
    <property type="entry name" value="Epsilon subunit of F1F0-ATP synthase C-terminal domain"/>
    <property type="match status" value="1"/>
</dbReference>
<dbReference type="SUPFAM" id="SSF51344">
    <property type="entry name" value="Epsilon subunit of F1F0-ATP synthase N-terminal domain"/>
    <property type="match status" value="1"/>
</dbReference>
<organism>
    <name type="scientific">Shewanella woodyi (strain ATCC 51908 / MS32)</name>
    <dbReference type="NCBI Taxonomy" id="392500"/>
    <lineage>
        <taxon>Bacteria</taxon>
        <taxon>Pseudomonadati</taxon>
        <taxon>Pseudomonadota</taxon>
        <taxon>Gammaproteobacteria</taxon>
        <taxon>Alteromonadales</taxon>
        <taxon>Shewanellaceae</taxon>
        <taxon>Shewanella</taxon>
    </lineage>
</organism>
<proteinExistence type="inferred from homology"/>
<gene>
    <name evidence="1" type="primary">atpC</name>
    <name type="ordered locus">Swoo_4897</name>
</gene>
<keyword id="KW-0066">ATP synthesis</keyword>
<keyword id="KW-0997">Cell inner membrane</keyword>
<keyword id="KW-1003">Cell membrane</keyword>
<keyword id="KW-0139">CF(1)</keyword>
<keyword id="KW-0375">Hydrogen ion transport</keyword>
<keyword id="KW-0406">Ion transport</keyword>
<keyword id="KW-0472">Membrane</keyword>
<keyword id="KW-1185">Reference proteome</keyword>
<keyword id="KW-0813">Transport</keyword>
<reference key="1">
    <citation type="submission" date="2008-02" db="EMBL/GenBank/DDBJ databases">
        <title>Complete sequence of Shewanella woodyi ATCC 51908.</title>
        <authorList>
            <consortium name="US DOE Joint Genome Institute"/>
            <person name="Copeland A."/>
            <person name="Lucas S."/>
            <person name="Lapidus A."/>
            <person name="Glavina del Rio T."/>
            <person name="Dalin E."/>
            <person name="Tice H."/>
            <person name="Bruce D."/>
            <person name="Goodwin L."/>
            <person name="Pitluck S."/>
            <person name="Sims D."/>
            <person name="Brettin T."/>
            <person name="Detter J.C."/>
            <person name="Han C."/>
            <person name="Kuske C.R."/>
            <person name="Schmutz J."/>
            <person name="Larimer F."/>
            <person name="Land M."/>
            <person name="Hauser L."/>
            <person name="Kyrpides N."/>
            <person name="Lykidis A."/>
            <person name="Zhao J.-S."/>
            <person name="Richardson P."/>
        </authorList>
    </citation>
    <scope>NUCLEOTIDE SEQUENCE [LARGE SCALE GENOMIC DNA]</scope>
    <source>
        <strain>ATCC 51908 / MS32</strain>
    </source>
</reference>
<sequence length="142" mass="14964">MAAMTVQLDIVSAENSIFSGLVAHLQVTGSEGDLGVMPGHAPLLTNIKPGMARIVKQDGKEEVFYLSGGILEVQPSSVSVLADVVKRADEIDEKAAEEAKRRAESAMADAGADFNYAAAANELAQAVAQLRVVDTIKKNIAR</sequence>
<name>ATPE_SHEWM</name>
<accession>B1KQ33</accession>
<comment type="function">
    <text evidence="1">Produces ATP from ADP in the presence of a proton gradient across the membrane.</text>
</comment>
<comment type="subunit">
    <text evidence="1">F-type ATPases have 2 components, CF(1) - the catalytic core - and CF(0) - the membrane proton channel. CF(1) has five subunits: alpha(3), beta(3), gamma(1), delta(1), epsilon(1). CF(0) has three main subunits: a, b and c.</text>
</comment>
<comment type="subcellular location">
    <subcellularLocation>
        <location evidence="1">Cell inner membrane</location>
        <topology evidence="1">Peripheral membrane protein</topology>
    </subcellularLocation>
</comment>
<comment type="similarity">
    <text evidence="1">Belongs to the ATPase epsilon chain family.</text>
</comment>